<keyword id="KW-0012">Acyltransferase</keyword>
<keyword id="KW-0998">Cell outer membrane</keyword>
<keyword id="KW-0472">Membrane</keyword>
<keyword id="KW-0732">Signal</keyword>
<keyword id="KW-0808">Transferase</keyword>
<accession>C6DIA0</accession>
<comment type="function">
    <text evidence="1">Transfers a fatty acid residue from the sn-1 position of a phospholipid to the N-linked hydroxyfatty acid chain on the proximal unit of lipid A or its precursors.</text>
</comment>
<comment type="catalytic activity">
    <reaction evidence="1">
        <text>a lipid A + a 1,2-diacyl-sn-glycero-3-phosphocholine = a hepta-acyl lipid A + a 2-acyl-sn-glycero-3-phosphocholine</text>
        <dbReference type="Rhea" id="RHEA:74275"/>
        <dbReference type="ChEBI" id="CHEBI:57643"/>
        <dbReference type="ChEBI" id="CHEBI:57875"/>
        <dbReference type="ChEBI" id="CHEBI:193141"/>
        <dbReference type="ChEBI" id="CHEBI:193142"/>
        <dbReference type="EC" id="2.3.1.251"/>
    </reaction>
</comment>
<comment type="catalytic activity">
    <reaction evidence="1">
        <text>a lipid IVA + a 1,2-diacyl-sn-glycero-3-phosphocholine = a lipid IVB + a 2-acyl-sn-glycero-3-phosphocholine</text>
        <dbReference type="Rhea" id="RHEA:74279"/>
        <dbReference type="ChEBI" id="CHEBI:57643"/>
        <dbReference type="ChEBI" id="CHEBI:57875"/>
        <dbReference type="ChEBI" id="CHEBI:176425"/>
        <dbReference type="ChEBI" id="CHEBI:193143"/>
        <dbReference type="EC" id="2.3.1.251"/>
    </reaction>
</comment>
<comment type="catalytic activity">
    <reaction evidence="1">
        <text>a lipid IIA + a 1,2-diacyl-sn-glycero-3-phosphocholine = a lipid IIB + a 2-acyl-sn-glycero-3-phosphocholine</text>
        <dbReference type="Rhea" id="RHEA:74283"/>
        <dbReference type="ChEBI" id="CHEBI:57643"/>
        <dbReference type="ChEBI" id="CHEBI:57875"/>
        <dbReference type="ChEBI" id="CHEBI:193144"/>
        <dbReference type="ChEBI" id="CHEBI:193145"/>
        <dbReference type="EC" id="2.3.1.251"/>
    </reaction>
</comment>
<comment type="subunit">
    <text evidence="1">Homodimer.</text>
</comment>
<comment type="subcellular location">
    <subcellularLocation>
        <location evidence="1">Cell outer membrane</location>
    </subcellularLocation>
</comment>
<comment type="similarity">
    <text evidence="1">Belongs to the lipid A palmitoyltransferase family.</text>
</comment>
<proteinExistence type="inferred from homology"/>
<name>PAGP_PECCP</name>
<gene>
    <name evidence="1" type="primary">pagP</name>
    <name type="ordered locus">PC1_4079</name>
</gene>
<sequence>MYLKRTLITLSLITLPIVPFLSYAAESINNTSSTENLAPVTVDSSDPVSDKQGESWWQRSKNNLSTTWNAPQSHDIYIPAITWHNRWTYDKEKTDRYNERPWGAGYGVSRLDKDGDWHGLYIMAFKDSFNKWEPIGGYGYEKRWRPTSDQDFQLGLGFTAGVTMRDNWNYIPIPVLLPLASISYSKLSFQATYIPGTYNNGNVFFAWLRWQI</sequence>
<evidence type="ECO:0000255" key="1">
    <source>
        <dbReference type="HAMAP-Rule" id="MF_00837"/>
    </source>
</evidence>
<evidence type="ECO:0000256" key="2">
    <source>
        <dbReference type="SAM" id="MobiDB-lite"/>
    </source>
</evidence>
<protein>
    <recommendedName>
        <fullName evidence="1">Lipid A acyltransferase PagP</fullName>
        <ecNumber evidence="1">2.3.1.251</ecNumber>
    </recommendedName>
    <alternativeName>
        <fullName evidence="1">Lipid A acylation protein</fullName>
    </alternativeName>
</protein>
<dbReference type="EC" id="2.3.1.251" evidence="1"/>
<dbReference type="EMBL" id="CP001657">
    <property type="protein sequence ID" value="ACT15094.1"/>
    <property type="molecule type" value="Genomic_DNA"/>
</dbReference>
<dbReference type="RefSeq" id="WP_015842171.1">
    <property type="nucleotide sequence ID" value="NC_012917.1"/>
</dbReference>
<dbReference type="SMR" id="C6DIA0"/>
<dbReference type="STRING" id="561230.PC1_4079"/>
<dbReference type="GeneID" id="67796058"/>
<dbReference type="KEGG" id="pct:PC1_4079"/>
<dbReference type="eggNOG" id="ENOG502Z7SY">
    <property type="taxonomic scope" value="Bacteria"/>
</dbReference>
<dbReference type="HOGENOM" id="CLU_104099_0_0_6"/>
<dbReference type="OrthoDB" id="9156803at2"/>
<dbReference type="Proteomes" id="UP000002736">
    <property type="component" value="Chromosome"/>
</dbReference>
<dbReference type="GO" id="GO:0009279">
    <property type="term" value="C:cell outer membrane"/>
    <property type="evidence" value="ECO:0007669"/>
    <property type="project" value="UniProtKB-SubCell"/>
</dbReference>
<dbReference type="GO" id="GO:0016746">
    <property type="term" value="F:acyltransferase activity"/>
    <property type="evidence" value="ECO:0007669"/>
    <property type="project" value="UniProtKB-UniRule"/>
</dbReference>
<dbReference type="GO" id="GO:0009245">
    <property type="term" value="P:lipid A biosynthetic process"/>
    <property type="evidence" value="ECO:0007669"/>
    <property type="project" value="UniProtKB-UniRule"/>
</dbReference>
<dbReference type="FunFam" id="2.40.160.20:FF:000002">
    <property type="entry name" value="Lipid A palmitoyltransferase PagP"/>
    <property type="match status" value="1"/>
</dbReference>
<dbReference type="Gene3D" id="2.40.160.20">
    <property type="match status" value="1"/>
</dbReference>
<dbReference type="HAMAP" id="MF_00837">
    <property type="entry name" value="PagP_transferase"/>
    <property type="match status" value="1"/>
</dbReference>
<dbReference type="InterPro" id="IPR009746">
    <property type="entry name" value="LipidA_acyl_PagP"/>
</dbReference>
<dbReference type="InterPro" id="IPR011250">
    <property type="entry name" value="OMP/PagP_b-brl"/>
</dbReference>
<dbReference type="NCBIfam" id="NF008271">
    <property type="entry name" value="PRK11045.1"/>
    <property type="match status" value="1"/>
</dbReference>
<dbReference type="Pfam" id="PF07017">
    <property type="entry name" value="PagP"/>
    <property type="match status" value="1"/>
</dbReference>
<dbReference type="SUPFAM" id="SSF56925">
    <property type="entry name" value="OMPA-like"/>
    <property type="match status" value="1"/>
</dbReference>
<feature type="signal peptide" evidence="1">
    <location>
        <begin position="1"/>
        <end position="24"/>
    </location>
</feature>
<feature type="chain" id="PRO_5000486317" description="Lipid A acyltransferase PagP">
    <location>
        <begin position="25"/>
        <end position="212"/>
    </location>
</feature>
<feature type="region of interest" description="Disordered" evidence="2">
    <location>
        <begin position="36"/>
        <end position="56"/>
    </location>
</feature>
<feature type="compositionally biased region" description="Polar residues" evidence="2">
    <location>
        <begin position="36"/>
        <end position="47"/>
    </location>
</feature>
<feature type="active site" evidence="1">
    <location>
        <position position="84"/>
    </location>
</feature>
<feature type="active site" evidence="1">
    <location>
        <position position="127"/>
    </location>
</feature>
<feature type="active site" evidence="1">
    <location>
        <position position="128"/>
    </location>
</feature>
<feature type="site" description="Role in lipopolysaccharide recognition" evidence="1">
    <location>
        <position position="93"/>
    </location>
</feature>
<feature type="site" description="Role in the phospholipid gating" evidence="1">
    <location>
        <position position="198"/>
    </location>
</feature>
<organism>
    <name type="scientific">Pectobacterium carotovorum subsp. carotovorum (strain PC1)</name>
    <dbReference type="NCBI Taxonomy" id="561230"/>
    <lineage>
        <taxon>Bacteria</taxon>
        <taxon>Pseudomonadati</taxon>
        <taxon>Pseudomonadota</taxon>
        <taxon>Gammaproteobacteria</taxon>
        <taxon>Enterobacterales</taxon>
        <taxon>Pectobacteriaceae</taxon>
        <taxon>Pectobacterium</taxon>
    </lineage>
</organism>
<reference key="1">
    <citation type="submission" date="2009-07" db="EMBL/GenBank/DDBJ databases">
        <title>Complete sequence of Pectobacterium carotovorum subsp. carotovorum PC1.</title>
        <authorList>
            <consortium name="US DOE Joint Genome Institute"/>
            <person name="Lucas S."/>
            <person name="Copeland A."/>
            <person name="Lapidus A."/>
            <person name="Glavina del Rio T."/>
            <person name="Tice H."/>
            <person name="Bruce D."/>
            <person name="Goodwin L."/>
            <person name="Pitluck S."/>
            <person name="Munk A.C."/>
            <person name="Brettin T."/>
            <person name="Detter J.C."/>
            <person name="Han C."/>
            <person name="Tapia R."/>
            <person name="Larimer F."/>
            <person name="Land M."/>
            <person name="Hauser L."/>
            <person name="Kyrpides N."/>
            <person name="Mikhailova N."/>
            <person name="Balakrishnan V."/>
            <person name="Glasner J."/>
            <person name="Perna N.T."/>
        </authorList>
    </citation>
    <scope>NUCLEOTIDE SEQUENCE [LARGE SCALE GENOMIC DNA]</scope>
    <source>
        <strain>PC1</strain>
    </source>
</reference>